<organism>
    <name type="scientific">Pseudomonas aeruginosa (strain ATCC 15692 / DSM 22644 / CIP 104116 / JCM 14847 / LMG 12228 / 1C / PRS 101 / PAO1)</name>
    <dbReference type="NCBI Taxonomy" id="208964"/>
    <lineage>
        <taxon>Bacteria</taxon>
        <taxon>Pseudomonadati</taxon>
        <taxon>Pseudomonadota</taxon>
        <taxon>Gammaproteobacteria</taxon>
        <taxon>Pseudomonadales</taxon>
        <taxon>Pseudomonadaceae</taxon>
        <taxon>Pseudomonas</taxon>
    </lineage>
</organism>
<evidence type="ECO:0000255" key="1">
    <source>
        <dbReference type="HAMAP-Rule" id="MF_01417"/>
    </source>
</evidence>
<protein>
    <recommendedName>
        <fullName evidence="1">Biosynthetic arginine decarboxylase</fullName>
        <shortName evidence="1">ADC</shortName>
        <ecNumber evidence="1">4.1.1.19</ecNumber>
    </recommendedName>
</protein>
<accession>Q9HUX1</accession>
<reference key="1">
    <citation type="journal article" date="2000" name="Nature">
        <title>Complete genome sequence of Pseudomonas aeruginosa PAO1, an opportunistic pathogen.</title>
        <authorList>
            <person name="Stover C.K."/>
            <person name="Pham X.-Q.T."/>
            <person name="Erwin A.L."/>
            <person name="Mizoguchi S.D."/>
            <person name="Warrener P."/>
            <person name="Hickey M.J."/>
            <person name="Brinkman F.S.L."/>
            <person name="Hufnagle W.O."/>
            <person name="Kowalik D.J."/>
            <person name="Lagrou M."/>
            <person name="Garber R.L."/>
            <person name="Goltry L."/>
            <person name="Tolentino E."/>
            <person name="Westbrock-Wadman S."/>
            <person name="Yuan Y."/>
            <person name="Brody L.L."/>
            <person name="Coulter S.N."/>
            <person name="Folger K.R."/>
            <person name="Kas A."/>
            <person name="Larbig K."/>
            <person name="Lim R.M."/>
            <person name="Smith K.A."/>
            <person name="Spencer D.H."/>
            <person name="Wong G.K.-S."/>
            <person name="Wu Z."/>
            <person name="Paulsen I.T."/>
            <person name="Reizer J."/>
            <person name="Saier M.H. Jr."/>
            <person name="Hancock R.E.W."/>
            <person name="Lory S."/>
            <person name="Olson M.V."/>
        </authorList>
    </citation>
    <scope>NUCLEOTIDE SEQUENCE [LARGE SCALE GENOMIC DNA]</scope>
    <source>
        <strain>ATCC 15692 / DSM 22644 / CIP 104116 / JCM 14847 / LMG 12228 / 1C / PRS 101 / PAO1</strain>
    </source>
</reference>
<name>SPEA_PSEAE</name>
<dbReference type="EC" id="4.1.1.19" evidence="1"/>
<dbReference type="EMBL" id="AE004091">
    <property type="protein sequence ID" value="AAG08224.1"/>
    <property type="molecule type" value="Genomic_DNA"/>
</dbReference>
<dbReference type="PIR" id="H83040">
    <property type="entry name" value="H83040"/>
</dbReference>
<dbReference type="RefSeq" id="NP_253526.1">
    <property type="nucleotide sequence ID" value="NC_002516.2"/>
</dbReference>
<dbReference type="RefSeq" id="WP_003095365.1">
    <property type="nucleotide sequence ID" value="NZ_QZGE01000002.1"/>
</dbReference>
<dbReference type="SMR" id="Q9HUX1"/>
<dbReference type="FunCoup" id="Q9HUX1">
    <property type="interactions" value="169"/>
</dbReference>
<dbReference type="STRING" id="208964.PA4839"/>
<dbReference type="PaxDb" id="208964-PA4839"/>
<dbReference type="GeneID" id="879594"/>
<dbReference type="KEGG" id="pae:PA4839"/>
<dbReference type="PATRIC" id="fig|208964.12.peg.5070"/>
<dbReference type="PseudoCAP" id="PA4839"/>
<dbReference type="HOGENOM" id="CLU_027243_1_0_6"/>
<dbReference type="InParanoid" id="Q9HUX1"/>
<dbReference type="OrthoDB" id="9802658at2"/>
<dbReference type="PhylomeDB" id="Q9HUX1"/>
<dbReference type="BioCyc" id="MetaCyc:MONOMER-12"/>
<dbReference type="BioCyc" id="PAER208964:G1FZ6-4953-MONOMER"/>
<dbReference type="BRENDA" id="4.1.1.19">
    <property type="organism ID" value="5087"/>
</dbReference>
<dbReference type="Proteomes" id="UP000002438">
    <property type="component" value="Chromosome"/>
</dbReference>
<dbReference type="GO" id="GO:0008792">
    <property type="term" value="F:arginine decarboxylase activity"/>
    <property type="evidence" value="ECO:0000315"/>
    <property type="project" value="CACAO"/>
</dbReference>
<dbReference type="GO" id="GO:0046872">
    <property type="term" value="F:metal ion binding"/>
    <property type="evidence" value="ECO:0007669"/>
    <property type="project" value="UniProtKB-KW"/>
</dbReference>
<dbReference type="GO" id="GO:0006527">
    <property type="term" value="P:arginine catabolic process"/>
    <property type="evidence" value="ECO:0007669"/>
    <property type="project" value="InterPro"/>
</dbReference>
<dbReference type="GO" id="GO:0033388">
    <property type="term" value="P:putrescine biosynthetic process from arginine"/>
    <property type="evidence" value="ECO:0000315"/>
    <property type="project" value="PseudoCAP"/>
</dbReference>
<dbReference type="GO" id="GO:0008295">
    <property type="term" value="P:spermidine biosynthetic process"/>
    <property type="evidence" value="ECO:0007669"/>
    <property type="project" value="UniProtKB-UniRule"/>
</dbReference>
<dbReference type="CDD" id="cd06830">
    <property type="entry name" value="PLPDE_III_ADC"/>
    <property type="match status" value="1"/>
</dbReference>
<dbReference type="FunFam" id="1.20.58.930:FF:000005">
    <property type="entry name" value="Biosynthetic arginine decarboxylase"/>
    <property type="match status" value="1"/>
</dbReference>
<dbReference type="FunFam" id="3.20.20.10:FF:000001">
    <property type="entry name" value="Biosynthetic arginine decarboxylase"/>
    <property type="match status" value="1"/>
</dbReference>
<dbReference type="Gene3D" id="1.10.287.3440">
    <property type="match status" value="1"/>
</dbReference>
<dbReference type="Gene3D" id="1.20.58.930">
    <property type="match status" value="1"/>
</dbReference>
<dbReference type="Gene3D" id="3.20.20.10">
    <property type="entry name" value="Alanine racemase"/>
    <property type="match status" value="1"/>
</dbReference>
<dbReference type="Gene3D" id="2.40.37.10">
    <property type="entry name" value="Lyase, Ornithine Decarboxylase, Chain A, domain 1"/>
    <property type="match status" value="1"/>
</dbReference>
<dbReference type="HAMAP" id="MF_01417">
    <property type="entry name" value="SpeA"/>
    <property type="match status" value="1"/>
</dbReference>
<dbReference type="InterPro" id="IPR009006">
    <property type="entry name" value="Ala_racemase/Decarboxylase_C"/>
</dbReference>
<dbReference type="InterPro" id="IPR040634">
    <property type="entry name" value="Arg_decarb_HB"/>
</dbReference>
<dbReference type="InterPro" id="IPR041128">
    <property type="entry name" value="Arg_decarbox_C"/>
</dbReference>
<dbReference type="InterPro" id="IPR002985">
    <property type="entry name" value="Arg_decrbxlase"/>
</dbReference>
<dbReference type="InterPro" id="IPR022657">
    <property type="entry name" value="De-COase2_CS"/>
</dbReference>
<dbReference type="InterPro" id="IPR022644">
    <property type="entry name" value="De-COase2_N"/>
</dbReference>
<dbReference type="InterPro" id="IPR022653">
    <property type="entry name" value="De-COase2_pyr-phos_BS"/>
</dbReference>
<dbReference type="InterPro" id="IPR000183">
    <property type="entry name" value="Orn/DAP/Arg_de-COase"/>
</dbReference>
<dbReference type="InterPro" id="IPR029066">
    <property type="entry name" value="PLP-binding_barrel"/>
</dbReference>
<dbReference type="NCBIfam" id="NF003763">
    <property type="entry name" value="PRK05354.1"/>
    <property type="match status" value="1"/>
</dbReference>
<dbReference type="NCBIfam" id="TIGR01273">
    <property type="entry name" value="speA"/>
    <property type="match status" value="1"/>
</dbReference>
<dbReference type="PANTHER" id="PTHR43295">
    <property type="entry name" value="ARGININE DECARBOXYLASE"/>
    <property type="match status" value="1"/>
</dbReference>
<dbReference type="PANTHER" id="PTHR43295:SF9">
    <property type="entry name" value="BIOSYNTHETIC ARGININE DECARBOXYLASE"/>
    <property type="match status" value="1"/>
</dbReference>
<dbReference type="Pfam" id="PF17810">
    <property type="entry name" value="Arg_decarb_HB"/>
    <property type="match status" value="1"/>
</dbReference>
<dbReference type="Pfam" id="PF17944">
    <property type="entry name" value="Arg_decarbox_C"/>
    <property type="match status" value="1"/>
</dbReference>
<dbReference type="Pfam" id="PF02784">
    <property type="entry name" value="Orn_Arg_deC_N"/>
    <property type="match status" value="1"/>
</dbReference>
<dbReference type="PIRSF" id="PIRSF001336">
    <property type="entry name" value="Arg_decrbxlase"/>
    <property type="match status" value="1"/>
</dbReference>
<dbReference type="PRINTS" id="PR01180">
    <property type="entry name" value="ARGDCRBXLASE"/>
</dbReference>
<dbReference type="PRINTS" id="PR01179">
    <property type="entry name" value="ODADCRBXLASE"/>
</dbReference>
<dbReference type="SUPFAM" id="SSF50621">
    <property type="entry name" value="Alanine racemase C-terminal domain-like"/>
    <property type="match status" value="1"/>
</dbReference>
<dbReference type="SUPFAM" id="SSF51419">
    <property type="entry name" value="PLP-binding barrel"/>
    <property type="match status" value="1"/>
</dbReference>
<dbReference type="PROSITE" id="PS00878">
    <property type="entry name" value="ODR_DC_2_1"/>
    <property type="match status" value="1"/>
</dbReference>
<dbReference type="PROSITE" id="PS00879">
    <property type="entry name" value="ODR_DC_2_2"/>
    <property type="match status" value="1"/>
</dbReference>
<gene>
    <name evidence="1" type="primary">speA</name>
    <name type="ordered locus">PA4839</name>
</gene>
<proteinExistence type="inferred from homology"/>
<feature type="chain" id="PRO_0000149971" description="Biosynthetic arginine decarboxylase">
    <location>
        <begin position="1"/>
        <end position="636"/>
    </location>
</feature>
<feature type="binding site" evidence="1">
    <location>
        <begin position="290"/>
        <end position="300"/>
    </location>
    <ligand>
        <name>substrate</name>
    </ligand>
</feature>
<feature type="modified residue" description="N6-(pyridoxal phosphate)lysine" evidence="1">
    <location>
        <position position="110"/>
    </location>
</feature>
<comment type="function">
    <text evidence="1">Catalyzes the biosynthesis of agmatine from arginine.</text>
</comment>
<comment type="catalytic activity">
    <reaction evidence="1">
        <text>L-arginine + H(+) = agmatine + CO2</text>
        <dbReference type="Rhea" id="RHEA:17641"/>
        <dbReference type="ChEBI" id="CHEBI:15378"/>
        <dbReference type="ChEBI" id="CHEBI:16526"/>
        <dbReference type="ChEBI" id="CHEBI:32682"/>
        <dbReference type="ChEBI" id="CHEBI:58145"/>
        <dbReference type="EC" id="4.1.1.19"/>
    </reaction>
</comment>
<comment type="cofactor">
    <cofactor evidence="1">
        <name>Mg(2+)</name>
        <dbReference type="ChEBI" id="CHEBI:18420"/>
    </cofactor>
</comment>
<comment type="cofactor">
    <cofactor evidence="1">
        <name>pyridoxal 5'-phosphate</name>
        <dbReference type="ChEBI" id="CHEBI:597326"/>
    </cofactor>
</comment>
<comment type="similarity">
    <text evidence="1">Belongs to the Orn/Lys/Arg decarboxylase class-II family. SpeA subfamily.</text>
</comment>
<sequence length="636" mass="70668">MAARRTRKDDGSNWTVADSRGVYGIRHWGAGYFAINDGGNVEVRPQGADSTPIDLYELVGQLREAGLSLPLLVRFPDILQDRVRKLTGAFDANIERLEYQSRYTALYPIKVNQQEAVVENIIATENVSIGLEAGSKPELMAVLALAPKGGTIVCNGYKDREFIKLALMGQKLGHNVFIVIEKESEVQLVIEEAANVGVQPQVGLRVRLSSLASSKWADTGGEKAKFGLSAAQLLSVVERFRQAGLDQGVRLLHFHMGSQIANLADYQHGFKEAIRYYGELRALGLPVDHIDVGGGLGVDYDGTHSRNASSINYDIDDYAGVVVGMLKEFCDAQGLPHPHIFSESGRALTAHHAVLITQVTDVERHNDDVPKIVDLDEQPEIVRWLAELLGPTDAEMVTETYWRATHYIGDAAAQYADGKISLAQKALAEQCYFAICRRLHNQLKARQRSHRQVLDELNDKLADKYICNFSVFQSLPDTWAIGQVLPILPLHRLGEEPDRRAVLQDLTCDSDGKITQYVDEQSIETSLPVHEVKEGEDYLIGVFLVGAYQEILGDMHNLFGDTDSVNVYQRADGGIYHAGIETHDTIEDMLRYVHLSPEELMTLYRDKVAGAKLTARERNQYLDALRLGLTRSAYLS</sequence>
<keyword id="KW-0210">Decarboxylase</keyword>
<keyword id="KW-0456">Lyase</keyword>
<keyword id="KW-0460">Magnesium</keyword>
<keyword id="KW-0479">Metal-binding</keyword>
<keyword id="KW-0620">Polyamine biosynthesis</keyword>
<keyword id="KW-0663">Pyridoxal phosphate</keyword>
<keyword id="KW-1185">Reference proteome</keyword>
<keyword id="KW-0745">Spermidine biosynthesis</keyword>